<reference key="1">
    <citation type="journal article" date="2008" name="Nat. Biotechnol.">
        <title>Genome sequencing and analysis of the filamentous fungus Penicillium chrysogenum.</title>
        <authorList>
            <person name="van den Berg M.A."/>
            <person name="Albang R."/>
            <person name="Albermann K."/>
            <person name="Badger J.H."/>
            <person name="Daran J.-M."/>
            <person name="Driessen A.J.M."/>
            <person name="Garcia-Estrada C."/>
            <person name="Fedorova N.D."/>
            <person name="Harris D.M."/>
            <person name="Heijne W.H.M."/>
            <person name="Joardar V.S."/>
            <person name="Kiel J.A.K.W."/>
            <person name="Kovalchuk A."/>
            <person name="Martin J.F."/>
            <person name="Nierman W.C."/>
            <person name="Nijland J.G."/>
            <person name="Pronk J.T."/>
            <person name="Roubos J.A."/>
            <person name="van der Klei I.J."/>
            <person name="van Peij N.N.M.E."/>
            <person name="Veenhuis M."/>
            <person name="von Doehren H."/>
            <person name="Wagner C."/>
            <person name="Wortman J.R."/>
            <person name="Bovenberg R.A.L."/>
        </authorList>
    </citation>
    <scope>NUCLEOTIDE SEQUENCE [LARGE SCALE GENOMIC DNA]</scope>
    <source>
        <strain>ATCC 28089 / DSM 1075 / NRRL 1951 / Wisconsin 54-1255</strain>
    </source>
</reference>
<dbReference type="EC" id="2.3.1.35" evidence="1"/>
<dbReference type="EC" id="2.3.1.1" evidence="1"/>
<dbReference type="EMBL" id="AM920437">
    <property type="protein sequence ID" value="CAP98884.1"/>
    <property type="molecule type" value="Genomic_DNA"/>
</dbReference>
<dbReference type="RefSeq" id="XP_002565512.1">
    <property type="nucleotide sequence ID" value="XM_002565466.1"/>
</dbReference>
<dbReference type="SMR" id="B6HQD4"/>
<dbReference type="STRING" id="500485.B6HQD4"/>
<dbReference type="MEROPS" id="T05.001"/>
<dbReference type="GeneID" id="8305150"/>
<dbReference type="KEGG" id="pcs:N7525_004791"/>
<dbReference type="VEuPathDB" id="FungiDB:PCH_Pc22g15960"/>
<dbReference type="eggNOG" id="KOG2786">
    <property type="taxonomic scope" value="Eukaryota"/>
</dbReference>
<dbReference type="HOGENOM" id="CLU_027172_1_0_1"/>
<dbReference type="OMA" id="WGRIVMA"/>
<dbReference type="OrthoDB" id="2017946at2759"/>
<dbReference type="BioCyc" id="PCHR:PC22G15960-MONOMER"/>
<dbReference type="UniPathway" id="UPA00068">
    <property type="reaction ID" value="UER00106"/>
</dbReference>
<dbReference type="UniPathway" id="UPA00068">
    <property type="reaction ID" value="UER00111"/>
</dbReference>
<dbReference type="Proteomes" id="UP000000724">
    <property type="component" value="Contig Pc00c22"/>
</dbReference>
<dbReference type="GO" id="GO:0005759">
    <property type="term" value="C:mitochondrial matrix"/>
    <property type="evidence" value="ECO:0007669"/>
    <property type="project" value="UniProtKB-SubCell"/>
</dbReference>
<dbReference type="GO" id="GO:0004358">
    <property type="term" value="F:glutamate N-acetyltransferase activity"/>
    <property type="evidence" value="ECO:0007669"/>
    <property type="project" value="UniProtKB-UniRule"/>
</dbReference>
<dbReference type="GO" id="GO:0004042">
    <property type="term" value="F:L-glutamate N-acetyltransferase activity"/>
    <property type="evidence" value="ECO:0007669"/>
    <property type="project" value="UniProtKB-UniRule"/>
</dbReference>
<dbReference type="GO" id="GO:0006526">
    <property type="term" value="P:L-arginine biosynthetic process"/>
    <property type="evidence" value="ECO:0007669"/>
    <property type="project" value="UniProtKB-UniRule"/>
</dbReference>
<dbReference type="GO" id="GO:0006592">
    <property type="term" value="P:ornithine biosynthetic process"/>
    <property type="evidence" value="ECO:0007669"/>
    <property type="project" value="TreeGrafter"/>
</dbReference>
<dbReference type="CDD" id="cd02152">
    <property type="entry name" value="OAT"/>
    <property type="match status" value="1"/>
</dbReference>
<dbReference type="FunFam" id="3.10.20.340:FF:000002">
    <property type="entry name" value="Arginine biosynthesis bifunctional protein ArgJ, mitochondrial"/>
    <property type="match status" value="1"/>
</dbReference>
<dbReference type="FunFam" id="3.30.2330.10:FF:000001">
    <property type="entry name" value="Arginine biosynthesis bifunctional protein ArgJ, mitochondrial"/>
    <property type="match status" value="1"/>
</dbReference>
<dbReference type="FunFam" id="3.60.70.12:FF:000002">
    <property type="entry name" value="Arginine biosynthesis bifunctional protein ArgJ, mitochondrial"/>
    <property type="match status" value="1"/>
</dbReference>
<dbReference type="Gene3D" id="3.30.2330.10">
    <property type="entry name" value="arginine biosynthesis bifunctional protein suprefamily"/>
    <property type="match status" value="1"/>
</dbReference>
<dbReference type="Gene3D" id="3.10.20.340">
    <property type="entry name" value="ArgJ beta chain, C-terminal domain"/>
    <property type="match status" value="1"/>
</dbReference>
<dbReference type="Gene3D" id="3.60.70.12">
    <property type="entry name" value="L-amino peptidase D-ALA esterase/amidase"/>
    <property type="match status" value="1"/>
</dbReference>
<dbReference type="HAMAP" id="MF_01106">
    <property type="entry name" value="ArgJ"/>
    <property type="match status" value="1"/>
</dbReference>
<dbReference type="InterPro" id="IPR002813">
    <property type="entry name" value="Arg_biosynth_ArgJ"/>
</dbReference>
<dbReference type="InterPro" id="IPR016117">
    <property type="entry name" value="ArgJ-like_dom_sf"/>
</dbReference>
<dbReference type="InterPro" id="IPR042195">
    <property type="entry name" value="ArgJ_beta_C"/>
</dbReference>
<dbReference type="NCBIfam" id="TIGR00120">
    <property type="entry name" value="ArgJ"/>
    <property type="match status" value="1"/>
</dbReference>
<dbReference type="NCBIfam" id="NF003802">
    <property type="entry name" value="PRK05388.1"/>
    <property type="match status" value="1"/>
</dbReference>
<dbReference type="PANTHER" id="PTHR23100">
    <property type="entry name" value="ARGININE BIOSYNTHESIS BIFUNCTIONAL PROTEIN ARGJ"/>
    <property type="match status" value="1"/>
</dbReference>
<dbReference type="PANTHER" id="PTHR23100:SF0">
    <property type="entry name" value="ARGININE BIOSYNTHESIS BIFUNCTIONAL PROTEIN ARGJ, MITOCHONDRIAL"/>
    <property type="match status" value="1"/>
</dbReference>
<dbReference type="Pfam" id="PF01960">
    <property type="entry name" value="ArgJ"/>
    <property type="match status" value="1"/>
</dbReference>
<dbReference type="SUPFAM" id="SSF56266">
    <property type="entry name" value="DmpA/ArgJ-like"/>
    <property type="match status" value="1"/>
</dbReference>
<comment type="function">
    <text evidence="1">Catalyzes two activities which are involved in the cyclic version of arginine biosynthesis: the synthesis of acetylglutamate from glutamate and acetyl-CoA, and of ornithine by transacetylation between acetylornithine and glutamate.</text>
</comment>
<comment type="catalytic activity">
    <reaction evidence="1">
        <text>N(2)-acetyl-L-ornithine + L-glutamate = N-acetyl-L-glutamate + L-ornithine</text>
        <dbReference type="Rhea" id="RHEA:15349"/>
        <dbReference type="ChEBI" id="CHEBI:29985"/>
        <dbReference type="ChEBI" id="CHEBI:44337"/>
        <dbReference type="ChEBI" id="CHEBI:46911"/>
        <dbReference type="ChEBI" id="CHEBI:57805"/>
        <dbReference type="EC" id="2.3.1.35"/>
    </reaction>
</comment>
<comment type="catalytic activity">
    <reaction evidence="1">
        <text>L-glutamate + acetyl-CoA = N-acetyl-L-glutamate + CoA + H(+)</text>
        <dbReference type="Rhea" id="RHEA:24292"/>
        <dbReference type="ChEBI" id="CHEBI:15378"/>
        <dbReference type="ChEBI" id="CHEBI:29985"/>
        <dbReference type="ChEBI" id="CHEBI:44337"/>
        <dbReference type="ChEBI" id="CHEBI:57287"/>
        <dbReference type="ChEBI" id="CHEBI:57288"/>
        <dbReference type="EC" id="2.3.1.1"/>
    </reaction>
</comment>
<comment type="pathway">
    <text evidence="1">Amino-acid biosynthesis; L-arginine biosynthesis; L-ornithine and N-acetyl-L-glutamate from L-glutamate and N(2)-acetyl-L-ornithine (cyclic): step 1/1.</text>
</comment>
<comment type="pathway">
    <text evidence="1">Amino-acid biosynthesis; L-arginine biosynthesis; N(2)-acetyl-L-ornithine from L-glutamate: step 1/4.</text>
</comment>
<comment type="subunit">
    <text evidence="1">Heterodimer of an alpha and a beta chain.</text>
</comment>
<comment type="subcellular location">
    <subcellularLocation>
        <location evidence="1">Mitochondrion matrix</location>
    </subcellularLocation>
</comment>
<comment type="PTM">
    <text evidence="1">The alpha and beta chains are autoproteolytically processed from a single precursor protein within the mitochondrion.</text>
</comment>
<comment type="miscellaneous">
    <text evidence="1">This protein may be expected to contain an N-terminal transit peptide but none has been predicted.</text>
</comment>
<comment type="similarity">
    <text evidence="1">Belongs to the ArgJ family.</text>
</comment>
<sequence>MATSLARMLKGQVRCYSAPLDMAIPASKQRYIPTTGTYPQGFQVSGTHVGVKASNTRFPDLALIASDTPCSAAAVFTTNKFQAAPVQVSRKTLQSRKGDGIRAVVINSGCANAVTGKGGLEDAVQMGRKVDECSGVENDSSLVMSTGVIGQRLPISKILDRIPTAHSTLASTHEAWLNTARAICTTDTFPKLLSRTFTLPSSPDRSYRLAGMTKGAGMIHPNMATLLGVLCTDAAVEPAALQSILKHAVSRSFNSISIDGDTSTNDTIAVLANGAAGGETVRAPGASASADYTALQGVVTDFAQELSQLVVRDGEGATKFVTVRVRNSPDYESGRMIASTIARSPLVKTALYGKDANWGRILCAVGYTQGVAEGTVVPERTSVSFRPVDGSEVLKLLVNGEPETVDEQRASVILQNEDLEIEVDLGGGEQGAAGCGGEDAVYWFCDFSHECIPAFAVDIIESREISGLKAFGSENAYIYEEEPLK</sequence>
<name>ARGJ_PENRW</name>
<accession>B6HQD4</accession>
<organism>
    <name type="scientific">Penicillium rubens (strain ATCC 28089 / DSM 1075 / NRRL 1951 / Wisconsin 54-1255)</name>
    <name type="common">Penicillium chrysogenum</name>
    <dbReference type="NCBI Taxonomy" id="500485"/>
    <lineage>
        <taxon>Eukaryota</taxon>
        <taxon>Fungi</taxon>
        <taxon>Dikarya</taxon>
        <taxon>Ascomycota</taxon>
        <taxon>Pezizomycotina</taxon>
        <taxon>Eurotiomycetes</taxon>
        <taxon>Eurotiomycetidae</taxon>
        <taxon>Eurotiales</taxon>
        <taxon>Aspergillaceae</taxon>
        <taxon>Penicillium</taxon>
        <taxon>Penicillium chrysogenum species complex</taxon>
    </lineage>
</organism>
<protein>
    <recommendedName>
        <fullName evidence="1">Arginine biosynthesis bifunctional protein ArgJ, mitochondrial</fullName>
    </recommendedName>
    <domain>
        <recommendedName>
            <fullName evidence="1">Glutamate N-acetyltransferase</fullName>
            <shortName evidence="1">GAT</shortName>
            <ecNumber evidence="1">2.3.1.35</ecNumber>
        </recommendedName>
        <alternativeName>
            <fullName evidence="1">Ornithine acetyltransferase</fullName>
            <shortName evidence="1">OATase</shortName>
        </alternativeName>
        <alternativeName>
            <fullName evidence="1">Ornithine transacetylase</fullName>
        </alternativeName>
    </domain>
    <domain>
        <recommendedName>
            <fullName evidence="1">Amino-acid acetyltransferase</fullName>
            <ecNumber evidence="1">2.3.1.1</ecNumber>
        </recommendedName>
        <alternativeName>
            <fullName evidence="1">N-acetylglutamate synthase</fullName>
            <shortName evidence="1">AGS</shortName>
        </alternativeName>
    </domain>
    <component>
        <recommendedName>
            <fullName evidence="1">Arginine biosynthesis bifunctional protein ArgJ alpha chain</fullName>
        </recommendedName>
    </component>
    <component>
        <recommendedName>
            <fullName evidence="1">Arginine biosynthesis bifunctional protein ArgJ beta chain</fullName>
        </recommendedName>
    </component>
</protein>
<gene>
    <name type="ORF">Pc22g15960</name>
</gene>
<proteinExistence type="inferred from homology"/>
<keyword id="KW-0012">Acyltransferase</keyword>
<keyword id="KW-0028">Amino-acid biosynthesis</keyword>
<keyword id="KW-0055">Arginine biosynthesis</keyword>
<keyword id="KW-0068">Autocatalytic cleavage</keyword>
<keyword id="KW-0496">Mitochondrion</keyword>
<keyword id="KW-0511">Multifunctional enzyme</keyword>
<keyword id="KW-1185">Reference proteome</keyword>
<keyword id="KW-0808">Transferase</keyword>
<evidence type="ECO:0000255" key="1">
    <source>
        <dbReference type="HAMAP-Rule" id="MF_03124"/>
    </source>
</evidence>
<feature type="chain" id="PRO_0000398080" description="Arginine biosynthesis bifunctional protein ArgJ alpha chain" evidence="1">
    <location>
        <begin position="1"/>
        <end position="224"/>
    </location>
</feature>
<feature type="chain" id="PRO_0000398081" description="Arginine biosynthesis bifunctional protein ArgJ beta chain" evidence="1">
    <location>
        <begin position="225"/>
        <end position="485"/>
    </location>
</feature>
<feature type="active site" description="Nucleophile" evidence="1">
    <location>
        <position position="225"/>
    </location>
</feature>
<feature type="binding site" evidence="1">
    <location>
        <position position="185"/>
    </location>
    <ligand>
        <name>substrate</name>
    </ligand>
</feature>
<feature type="binding site" evidence="1">
    <location>
        <position position="214"/>
    </location>
    <ligand>
        <name>substrate</name>
    </ligand>
</feature>
<feature type="binding site" evidence="1">
    <location>
        <position position="225"/>
    </location>
    <ligand>
        <name>substrate</name>
    </ligand>
</feature>
<feature type="binding site" evidence="1">
    <location>
        <position position="315"/>
    </location>
    <ligand>
        <name>substrate</name>
    </ligand>
</feature>
<feature type="site" description="Involved in the stabilization of negative charge on the oxyanion by the formation of the oxyanion hole" evidence="1">
    <location>
        <position position="146"/>
    </location>
</feature>
<feature type="site" description="Involved in the stabilization of negative charge on the oxyanion by the formation of the oxyanion hole" evidence="1">
    <location>
        <position position="147"/>
    </location>
</feature>
<feature type="site" description="Cleavage; by autolysis" evidence="1">
    <location>
        <begin position="224"/>
        <end position="225"/>
    </location>
</feature>